<name>LRC8C_BOVIN</name>
<dbReference type="EMBL" id="BC142315">
    <property type="protein sequence ID" value="AAI42316.1"/>
    <property type="molecule type" value="mRNA"/>
</dbReference>
<dbReference type="RefSeq" id="NP_001092509.1">
    <property type="nucleotide sequence ID" value="NM_001099039.2"/>
</dbReference>
<dbReference type="SMR" id="A5PK13"/>
<dbReference type="FunCoup" id="A5PK13">
    <property type="interactions" value="767"/>
</dbReference>
<dbReference type="STRING" id="9913.ENSBTAP00000072625"/>
<dbReference type="GlyCosmos" id="A5PK13">
    <property type="glycosylation" value="2 sites, No reported glycans"/>
</dbReference>
<dbReference type="GlyGen" id="A5PK13">
    <property type="glycosylation" value="2 sites"/>
</dbReference>
<dbReference type="PaxDb" id="9913-ENSBTAP00000001193"/>
<dbReference type="Ensembl" id="ENSBTAT00000001193.4">
    <property type="protein sequence ID" value="ENSBTAP00000001193.3"/>
    <property type="gene ID" value="ENSBTAG00000000900.5"/>
</dbReference>
<dbReference type="GeneID" id="527708"/>
<dbReference type="KEGG" id="bta:527708"/>
<dbReference type="CTD" id="84230"/>
<dbReference type="VEuPathDB" id="HostDB:ENSBTAG00000000900"/>
<dbReference type="VGNC" id="VGNC:31031">
    <property type="gene designation" value="LRRC8C"/>
</dbReference>
<dbReference type="eggNOG" id="KOG0619">
    <property type="taxonomic scope" value="Eukaryota"/>
</dbReference>
<dbReference type="GeneTree" id="ENSGT00940000159250"/>
<dbReference type="HOGENOM" id="CLU_019019_0_0_1"/>
<dbReference type="InParanoid" id="A5PK13"/>
<dbReference type="OMA" id="YNSIMYI"/>
<dbReference type="OrthoDB" id="660555at2759"/>
<dbReference type="TreeFam" id="TF331443"/>
<dbReference type="Reactome" id="R-BTA-5223345">
    <property type="pathway name" value="Miscellaneous transport and binding events"/>
</dbReference>
<dbReference type="Proteomes" id="UP000009136">
    <property type="component" value="Chromosome 3"/>
</dbReference>
<dbReference type="Bgee" id="ENSBTAG00000000900">
    <property type="expression patterns" value="Expressed in oocyte and 105 other cell types or tissues"/>
</dbReference>
<dbReference type="GO" id="GO:0005737">
    <property type="term" value="C:cytoplasm"/>
    <property type="evidence" value="ECO:0000250"/>
    <property type="project" value="UniProtKB"/>
</dbReference>
<dbReference type="GO" id="GO:0005789">
    <property type="term" value="C:endoplasmic reticulum membrane"/>
    <property type="evidence" value="ECO:0007669"/>
    <property type="project" value="UniProtKB-SubCell"/>
</dbReference>
<dbReference type="GO" id="GO:0034702">
    <property type="term" value="C:monoatomic ion channel complex"/>
    <property type="evidence" value="ECO:0000250"/>
    <property type="project" value="UniProtKB"/>
</dbReference>
<dbReference type="GO" id="GO:0005886">
    <property type="term" value="C:plasma membrane"/>
    <property type="evidence" value="ECO:0000250"/>
    <property type="project" value="UniProtKB"/>
</dbReference>
<dbReference type="GO" id="GO:0005225">
    <property type="term" value="F:volume-sensitive anion channel activity"/>
    <property type="evidence" value="ECO:0000250"/>
    <property type="project" value="UniProtKB"/>
</dbReference>
<dbReference type="GO" id="GO:0015810">
    <property type="term" value="P:aspartate transmembrane transport"/>
    <property type="evidence" value="ECO:0000318"/>
    <property type="project" value="GO_Central"/>
</dbReference>
<dbReference type="GO" id="GO:0140361">
    <property type="term" value="P:cyclic-GMP-AMP transmembrane import across plasma membrane"/>
    <property type="evidence" value="ECO:0000250"/>
    <property type="project" value="UniProtKB"/>
</dbReference>
<dbReference type="GO" id="GO:0045444">
    <property type="term" value="P:fat cell differentiation"/>
    <property type="evidence" value="ECO:0007669"/>
    <property type="project" value="Ensembl"/>
</dbReference>
<dbReference type="GO" id="GO:0035556">
    <property type="term" value="P:intracellular signal transduction"/>
    <property type="evidence" value="ECO:0000318"/>
    <property type="project" value="GO_Central"/>
</dbReference>
<dbReference type="GO" id="GO:0098656">
    <property type="term" value="P:monoatomic anion transmembrane transport"/>
    <property type="evidence" value="ECO:0000250"/>
    <property type="project" value="UniProtKB"/>
</dbReference>
<dbReference type="GO" id="GO:0034214">
    <property type="term" value="P:protein hexamerization"/>
    <property type="evidence" value="ECO:0000250"/>
    <property type="project" value="UniProtKB"/>
</dbReference>
<dbReference type="FunFam" id="3.80.10.10:FF:000156">
    <property type="entry name" value="volume-regulated anion channel subunit LRRC8C isoform X2"/>
    <property type="match status" value="1"/>
</dbReference>
<dbReference type="FunFam" id="3.80.10.10:FF:000182">
    <property type="entry name" value="volume-regulated anion channel subunit LRRC8C isoform X2"/>
    <property type="match status" value="1"/>
</dbReference>
<dbReference type="Gene3D" id="3.80.10.10">
    <property type="entry name" value="Ribonuclease Inhibitor"/>
    <property type="match status" value="1"/>
</dbReference>
<dbReference type="InterPro" id="IPR001611">
    <property type="entry name" value="Leu-rich_rpt"/>
</dbReference>
<dbReference type="InterPro" id="IPR003591">
    <property type="entry name" value="Leu-rich_rpt_typical-subtyp"/>
</dbReference>
<dbReference type="InterPro" id="IPR032675">
    <property type="entry name" value="LRR_dom_sf"/>
</dbReference>
<dbReference type="InterPro" id="IPR050216">
    <property type="entry name" value="LRR_domain-containing"/>
</dbReference>
<dbReference type="InterPro" id="IPR021040">
    <property type="entry name" value="LRRC8_Pannexin-like"/>
</dbReference>
<dbReference type="PANTHER" id="PTHR48051">
    <property type="match status" value="1"/>
</dbReference>
<dbReference type="PANTHER" id="PTHR48051:SF1">
    <property type="entry name" value="RAS SUPPRESSOR PROTEIN 1"/>
    <property type="match status" value="1"/>
</dbReference>
<dbReference type="Pfam" id="PF13855">
    <property type="entry name" value="LRR_8"/>
    <property type="match status" value="1"/>
</dbReference>
<dbReference type="Pfam" id="PF12534">
    <property type="entry name" value="Pannexin_like"/>
    <property type="match status" value="1"/>
</dbReference>
<dbReference type="SMART" id="SM00369">
    <property type="entry name" value="LRR_TYP"/>
    <property type="match status" value="7"/>
</dbReference>
<dbReference type="SUPFAM" id="SSF52058">
    <property type="entry name" value="L domain-like"/>
    <property type="match status" value="1"/>
</dbReference>
<dbReference type="PROSITE" id="PS51450">
    <property type="entry name" value="LRR"/>
    <property type="match status" value="7"/>
</dbReference>
<comment type="function">
    <text evidence="5">Non-essential component of the volume-regulated anion channel (VRAC, also named VSOAC channel), an anion channel required to maintain a constant cell volume in response to extracellular or intracellular osmotic changes. The VRAC channel conducts iodide better than chloride and can also conduct organic osmolytes like taurine. Plays a redundant role in the efflux of amino acids, such as aspartate and glutamate, in response to osmotic stress. The VRAC channel also mediates transport of immunoreactive cyclic dinucleotide GMP-AMP (2'-3'-cGAMP), an immune messenger produced in response to DNA virus in the cytosol. Channel activity requires LRRC8A plus at least one other family member (LRRC8B, LRRC8C, LRRC8D or LRRC8E); channel characteristics depend on the precise subunit composition.</text>
</comment>
<comment type="catalytic activity">
    <reaction evidence="5">
        <text>chloride(in) = chloride(out)</text>
        <dbReference type="Rhea" id="RHEA:29823"/>
        <dbReference type="ChEBI" id="CHEBI:17996"/>
    </reaction>
</comment>
<comment type="catalytic activity">
    <reaction evidence="5">
        <text>iodide(out) = iodide(in)</text>
        <dbReference type="Rhea" id="RHEA:66324"/>
        <dbReference type="ChEBI" id="CHEBI:16382"/>
    </reaction>
</comment>
<comment type="catalytic activity">
    <reaction evidence="5">
        <text>taurine(out) = taurine(in)</text>
        <dbReference type="Rhea" id="RHEA:66328"/>
        <dbReference type="ChEBI" id="CHEBI:507393"/>
    </reaction>
</comment>
<comment type="catalytic activity">
    <reaction evidence="5">
        <text>2',3'-cGAMP(out) = 2',3'-cGAMP(in)</text>
        <dbReference type="Rhea" id="RHEA:66320"/>
        <dbReference type="ChEBI" id="CHEBI:143093"/>
    </reaction>
    <physiologicalReaction direction="left-to-right" evidence="5">
        <dbReference type="Rhea" id="RHEA:66321"/>
    </physiologicalReaction>
    <physiologicalReaction direction="right-to-left" evidence="5">
        <dbReference type="Rhea" id="RHEA:66322"/>
    </physiologicalReaction>
</comment>
<comment type="subunit">
    <text evidence="2">Heterohexamer; oligomerizes with other LRRC8 proteins (LRRC8A, LRRC8B, LRRC8D and/or LRRC8E) to form a heterohexamer (By similarity). Homoheptamer; inactive, likely because it is not targeted to the plasma membrane in the absence of LRRC8A (By similarity). In vivo, the subunit composition may depend primarily on expression levels, and heterooligomeric channels containing various proportions of the different LRRC8 proteins may coexist (By similarity).</text>
</comment>
<comment type="subcellular location">
    <subcellularLocation>
        <location evidence="5">Cell membrane</location>
        <topology evidence="5">Multi-pass membrane protein</topology>
    </subcellularLocation>
    <subcellularLocation>
        <location evidence="5">Endoplasmic reticulum membrane</location>
    </subcellularLocation>
    <text evidence="5">In the absence of LRRC8A, resides primarily in a cytoplasmic compartment, probably the endoplasmic reticulum. Requires LRRC8A for expression at the cell membrane.</text>
</comment>
<comment type="domain">
    <text evidence="3">The volume-regulated anion channel (VRAC) channel forms a trimer of dimers, with symmetry mismatch between the pore-forming domain and the cytosolic LRR repeats, a topology similar to gap junction proteins.</text>
</comment>
<comment type="domain">
    <text evidence="5">The cytoplasmic N-terminus preceding the first transmembrane (residues 1-22) regulates volume-regulated anion channel (VRAC) conductance, ion permeability and inactivation gating.</text>
</comment>
<comment type="similarity">
    <text evidence="8">Belongs to the LRRC8 family.</text>
</comment>
<protein>
    <recommendedName>
        <fullName evidence="4">Volume-regulated anion channel subunit LRRC8C</fullName>
    </recommendedName>
    <alternativeName>
        <fullName evidence="5">Leucine-rich repeat-containing protein 8C</fullName>
    </alternativeName>
</protein>
<feature type="chain" id="PRO_0000367049" description="Volume-regulated anion channel subunit LRRC8C">
    <location>
        <begin position="1"/>
        <end position="803"/>
    </location>
</feature>
<feature type="topological domain" description="Cytoplasmic" evidence="2">
    <location>
        <begin position="1"/>
        <end position="22"/>
    </location>
</feature>
<feature type="transmembrane region" description="Helical; Name=1" evidence="2">
    <location>
        <begin position="23"/>
        <end position="43"/>
    </location>
</feature>
<feature type="topological domain" description="Extracellular" evidence="2">
    <location>
        <begin position="44"/>
        <end position="125"/>
    </location>
</feature>
<feature type="transmembrane region" description="Helical; Name=2" evidence="2">
    <location>
        <begin position="126"/>
        <end position="146"/>
    </location>
</feature>
<feature type="topological domain" description="Cytoplasmic" evidence="2">
    <location>
        <begin position="147"/>
        <end position="266"/>
    </location>
</feature>
<feature type="transmembrane region" description="Helical; Name=3" evidence="2">
    <location>
        <begin position="267"/>
        <end position="287"/>
    </location>
</feature>
<feature type="topological domain" description="Extracellular" evidence="2">
    <location>
        <begin position="288"/>
        <end position="320"/>
    </location>
</feature>
<feature type="transmembrane region" description="Helical; Name=4" evidence="2">
    <location>
        <begin position="321"/>
        <end position="341"/>
    </location>
</feature>
<feature type="topological domain" description="Cytoplasmic" evidence="2">
    <location>
        <begin position="342"/>
        <end position="803"/>
    </location>
</feature>
<feature type="repeat" description="LRR 1" evidence="4">
    <location>
        <begin position="397"/>
        <end position="419"/>
    </location>
</feature>
<feature type="repeat" description="LRR 2" evidence="4">
    <location>
        <begin position="420"/>
        <end position="443"/>
    </location>
</feature>
<feature type="repeat" description="LRR 3" evidence="4">
    <location>
        <begin position="446"/>
        <end position="465"/>
    </location>
</feature>
<feature type="repeat" description="LRR 4" evidence="4">
    <location>
        <begin position="468"/>
        <end position="490"/>
    </location>
</feature>
<feature type="repeat" description="LRR 5" evidence="4">
    <location>
        <begin position="492"/>
        <end position="513"/>
    </location>
</feature>
<feature type="repeat" description="LRR 6" evidence="4">
    <location>
        <begin position="515"/>
        <end position="536"/>
    </location>
</feature>
<feature type="repeat" description="LRR 7" evidence="4">
    <location>
        <begin position="543"/>
        <end position="563"/>
    </location>
</feature>
<feature type="repeat" description="LRR 8" evidence="4">
    <location>
        <begin position="566"/>
        <end position="586"/>
    </location>
</feature>
<feature type="repeat" description="LRR 9" evidence="4">
    <location>
        <begin position="590"/>
        <end position="611"/>
    </location>
</feature>
<feature type="repeat" description="LRR 10" evidence="4">
    <location>
        <begin position="613"/>
        <end position="634"/>
    </location>
</feature>
<feature type="repeat" description="LRR 11" evidence="4">
    <location>
        <begin position="638"/>
        <end position="659"/>
    </location>
</feature>
<feature type="repeat" description="LRR 12" evidence="4">
    <location>
        <begin position="661"/>
        <end position="682"/>
    </location>
</feature>
<feature type="repeat" description="LRR 13" evidence="4">
    <location>
        <begin position="684"/>
        <end position="705"/>
    </location>
</feature>
<feature type="repeat" description="LRR 14" evidence="4">
    <location>
        <begin position="707"/>
        <end position="728"/>
    </location>
</feature>
<feature type="repeat" description="LRR 15" evidence="4">
    <location>
        <begin position="730"/>
        <end position="751"/>
    </location>
</feature>
<feature type="repeat" description="LRR 16" evidence="4">
    <location>
        <begin position="753"/>
        <end position="774"/>
    </location>
</feature>
<feature type="repeat" description="LRR 17" evidence="4">
    <location>
        <begin position="776"/>
        <end position="799"/>
    </location>
</feature>
<feature type="region of interest" description="Disordered" evidence="7">
    <location>
        <begin position="177"/>
        <end position="209"/>
    </location>
</feature>
<feature type="compositionally biased region" description="Polar residues" evidence="7">
    <location>
        <begin position="191"/>
        <end position="209"/>
    </location>
</feature>
<feature type="modified residue" description="Phosphoserine" evidence="5">
    <location>
        <position position="212"/>
    </location>
</feature>
<feature type="modified residue" description="Phosphoserine" evidence="1">
    <location>
        <position position="215"/>
    </location>
</feature>
<feature type="glycosylation site" description="N-linked (GlcNAc...) asparagine" evidence="6">
    <location>
        <position position="64"/>
    </location>
</feature>
<feature type="glycosylation site" description="N-linked (GlcNAc...) asparagine" evidence="6">
    <location>
        <position position="70"/>
    </location>
</feature>
<feature type="disulfide bond" evidence="2">
    <location>
        <begin position="54"/>
        <end position="308"/>
    </location>
</feature>
<feature type="disulfide bond" evidence="2">
    <location>
        <begin position="115"/>
        <end position="293"/>
    </location>
</feature>
<reference key="1">
    <citation type="submission" date="2007-06" db="EMBL/GenBank/DDBJ databases">
        <authorList>
            <consortium name="NIH - Mammalian Gene Collection (MGC) project"/>
        </authorList>
    </citation>
    <scope>NUCLEOTIDE SEQUENCE [LARGE SCALE MRNA]</scope>
    <source>
        <strain>Hereford</strain>
        <tissue>Thymus</tissue>
    </source>
</reference>
<proteinExistence type="evidence at transcript level"/>
<accession>A5PK13</accession>
<organism>
    <name type="scientific">Bos taurus</name>
    <name type="common">Bovine</name>
    <dbReference type="NCBI Taxonomy" id="9913"/>
    <lineage>
        <taxon>Eukaryota</taxon>
        <taxon>Metazoa</taxon>
        <taxon>Chordata</taxon>
        <taxon>Craniata</taxon>
        <taxon>Vertebrata</taxon>
        <taxon>Euteleostomi</taxon>
        <taxon>Mammalia</taxon>
        <taxon>Eutheria</taxon>
        <taxon>Laurasiatheria</taxon>
        <taxon>Artiodactyla</taxon>
        <taxon>Ruminantia</taxon>
        <taxon>Pecora</taxon>
        <taxon>Bovidae</taxon>
        <taxon>Bovinae</taxon>
        <taxon>Bos</taxon>
    </lineage>
</organism>
<keyword id="KW-1003">Cell membrane</keyword>
<keyword id="KW-1015">Disulfide bond</keyword>
<keyword id="KW-0256">Endoplasmic reticulum</keyword>
<keyword id="KW-0325">Glycoprotein</keyword>
<keyword id="KW-0407">Ion channel</keyword>
<keyword id="KW-0406">Ion transport</keyword>
<keyword id="KW-0433">Leucine-rich repeat</keyword>
<keyword id="KW-0472">Membrane</keyword>
<keyword id="KW-0597">Phosphoprotein</keyword>
<keyword id="KW-1185">Reference proteome</keyword>
<keyword id="KW-0677">Repeat</keyword>
<keyword id="KW-0812">Transmembrane</keyword>
<keyword id="KW-1133">Transmembrane helix</keyword>
<keyword id="KW-0813">Transport</keyword>
<gene>
    <name evidence="5" type="primary">LRRC8C</name>
</gene>
<evidence type="ECO:0000250" key="1">
    <source>
        <dbReference type="UniProtKB" id="Q498T9"/>
    </source>
</evidence>
<evidence type="ECO:0000250" key="2">
    <source>
        <dbReference type="UniProtKB" id="Q80WG5"/>
    </source>
</evidence>
<evidence type="ECO:0000250" key="3">
    <source>
        <dbReference type="UniProtKB" id="Q8IWT6"/>
    </source>
</evidence>
<evidence type="ECO:0000250" key="4">
    <source>
        <dbReference type="UniProtKB" id="Q8R502"/>
    </source>
</evidence>
<evidence type="ECO:0000250" key="5">
    <source>
        <dbReference type="UniProtKB" id="Q8TDW0"/>
    </source>
</evidence>
<evidence type="ECO:0000255" key="6"/>
<evidence type="ECO:0000256" key="7">
    <source>
        <dbReference type="SAM" id="MobiDB-lite"/>
    </source>
</evidence>
<evidence type="ECO:0000305" key="8"/>
<sequence length="803" mass="92319">MIPVTEFRQFSEQQPAFRVLKPWWDVFTDYLSVAMLMIGVFGCTLQVMQDKIICLPKRVQPSQNQSSVSNVSQAVASTTPLPPPKPSPSNPVTVEMKGLKTDLDLQQYSFINQMCYERALHWYAKYFPYLVLIHTLVFMLCSNFWFKFPGSSSKIEHFISILGKCFDSPWTTRALSEVSGEDSEEKDNRKNNMSRSNTTQSGPEGSLVNSQSLKSIPEKFVVDKSTAGALDKKEGEQAKALFEKVKKFRLHVEEGDILYAMYVRQTVLKVIKFLIIIAYNSALVSKVQFTVDCNVDIQDMTGYKNFSCNHTMAHLFSKLSFCYLCFVSIYGLTCLYTLYWLFYRSLKEYSFEYVRQETGIDDIPDVKNDFAFMLHMIDQYDPLYSKRFAVFLSEVSENKLKQLNLNNEWTPDKLRQKLQTNAHNRLELPLIMLSGLPDTVFEITELQSLKLEIIKNVMIPATIAQLDNLQELSLHQCSVKIHSAALSFLKENLKVLSVKFDDMRELPPWMYGLRNLEELYLVGSLSHDISRNVTLESLRDLKSLKILSIKSNVSKIPQAVVDVSSHLQKMCIHNDGTKLVMLNNLKKMTNLTELELVHCDLERIPHAVFSLLSLQELDLKENNLKSIEEIVSFQHLRKLTVLKLWHNSITYIPEHIKKLTSLERLSFSHNKIEVLPSHLFLCNKIRYLDLSYNDIRFIPPEIGVLQSLQYFSITCNKVESLPDELYFCKKLKTLKIGKNSLSVLSPKIGNLLFLSYLDVKGNHFEILPPELGDCRALKRAGLVVEDALFETLPSDVREQMKTE</sequence>